<gene>
    <name evidence="1" type="primary">panC</name>
    <name type="ordered locus">Amuc_0404</name>
</gene>
<accession>B2UND0</accession>
<keyword id="KW-0067">ATP-binding</keyword>
<keyword id="KW-0963">Cytoplasm</keyword>
<keyword id="KW-0436">Ligase</keyword>
<keyword id="KW-0547">Nucleotide-binding</keyword>
<keyword id="KW-0566">Pantothenate biosynthesis</keyword>
<keyword id="KW-1185">Reference proteome</keyword>
<comment type="function">
    <text evidence="1">Catalyzes the condensation of pantoate with beta-alanine in an ATP-dependent reaction via a pantoyl-adenylate intermediate.</text>
</comment>
<comment type="catalytic activity">
    <reaction evidence="1">
        <text>(R)-pantoate + beta-alanine + ATP = (R)-pantothenate + AMP + diphosphate + H(+)</text>
        <dbReference type="Rhea" id="RHEA:10912"/>
        <dbReference type="ChEBI" id="CHEBI:15378"/>
        <dbReference type="ChEBI" id="CHEBI:15980"/>
        <dbReference type="ChEBI" id="CHEBI:29032"/>
        <dbReference type="ChEBI" id="CHEBI:30616"/>
        <dbReference type="ChEBI" id="CHEBI:33019"/>
        <dbReference type="ChEBI" id="CHEBI:57966"/>
        <dbReference type="ChEBI" id="CHEBI:456215"/>
        <dbReference type="EC" id="6.3.2.1"/>
    </reaction>
</comment>
<comment type="pathway">
    <text evidence="1">Cofactor biosynthesis; (R)-pantothenate biosynthesis; (R)-pantothenate from (R)-pantoate and beta-alanine: step 1/1.</text>
</comment>
<comment type="subunit">
    <text evidence="1">Homodimer.</text>
</comment>
<comment type="subcellular location">
    <subcellularLocation>
        <location evidence="1">Cytoplasm</location>
    </subcellularLocation>
</comment>
<comment type="miscellaneous">
    <text evidence="1">The reaction proceeds by a bi uni uni bi ping pong mechanism.</text>
</comment>
<comment type="similarity">
    <text evidence="1">Belongs to the pantothenate synthetase family.</text>
</comment>
<organism>
    <name type="scientific">Akkermansia muciniphila (strain ATCC BAA-835 / DSM 22959 / JCM 33894 / BCRC 81048 / CCUG 64013 / CIP 107961 / Muc)</name>
    <dbReference type="NCBI Taxonomy" id="349741"/>
    <lineage>
        <taxon>Bacteria</taxon>
        <taxon>Pseudomonadati</taxon>
        <taxon>Verrucomicrobiota</taxon>
        <taxon>Verrucomicrobiia</taxon>
        <taxon>Verrucomicrobiales</taxon>
        <taxon>Akkermansiaceae</taxon>
        <taxon>Akkermansia</taxon>
    </lineage>
</organism>
<sequence>MQTFSTKAQLRAALLKHHRKHDHVVLVPTMGALHAGHRALLEQARKLAGEDGVVVASIFVNPIQFNNSSDLQTYPRTPEKDLEVCEGAGVDYVFSPAPEEMYSGERSIAVEESFLSATLCGASRPGHFSGVCTVLAKLFNLVQPTDAIFGKKDYQQLAIIRRMVRDLDFPVRIHGAEIVRHGNGLAYSSRNARLTPEQKEQAVVIRQAMLQARDEFQAGADASKVKEHAAAMIEGVPGTRIDYLEIVDAETMQPVAENRKPALMAAAVYFGDVRLIDNIEL</sequence>
<dbReference type="EC" id="6.3.2.1" evidence="1"/>
<dbReference type="EMBL" id="CP001071">
    <property type="protein sequence ID" value="ACD04242.1"/>
    <property type="molecule type" value="Genomic_DNA"/>
</dbReference>
<dbReference type="RefSeq" id="WP_012419457.1">
    <property type="nucleotide sequence ID" value="NC_010655.1"/>
</dbReference>
<dbReference type="SMR" id="B2UND0"/>
<dbReference type="STRING" id="349741.Amuc_0404"/>
<dbReference type="PaxDb" id="349741-Amuc_0404"/>
<dbReference type="KEGG" id="amu:Amuc_0404"/>
<dbReference type="eggNOG" id="COG0414">
    <property type="taxonomic scope" value="Bacteria"/>
</dbReference>
<dbReference type="HOGENOM" id="CLU_047148_0_0_0"/>
<dbReference type="OrthoDB" id="9773087at2"/>
<dbReference type="BioCyc" id="AMUC349741:G1GBX-447-MONOMER"/>
<dbReference type="UniPathway" id="UPA00028">
    <property type="reaction ID" value="UER00005"/>
</dbReference>
<dbReference type="Proteomes" id="UP000001031">
    <property type="component" value="Chromosome"/>
</dbReference>
<dbReference type="GO" id="GO:0005829">
    <property type="term" value="C:cytosol"/>
    <property type="evidence" value="ECO:0007669"/>
    <property type="project" value="TreeGrafter"/>
</dbReference>
<dbReference type="GO" id="GO:0005524">
    <property type="term" value="F:ATP binding"/>
    <property type="evidence" value="ECO:0007669"/>
    <property type="project" value="UniProtKB-KW"/>
</dbReference>
<dbReference type="GO" id="GO:0004592">
    <property type="term" value="F:pantoate-beta-alanine ligase activity"/>
    <property type="evidence" value="ECO:0007669"/>
    <property type="project" value="UniProtKB-UniRule"/>
</dbReference>
<dbReference type="GO" id="GO:0015940">
    <property type="term" value="P:pantothenate biosynthetic process"/>
    <property type="evidence" value="ECO:0007669"/>
    <property type="project" value="UniProtKB-UniRule"/>
</dbReference>
<dbReference type="CDD" id="cd00560">
    <property type="entry name" value="PanC"/>
    <property type="match status" value="1"/>
</dbReference>
<dbReference type="Gene3D" id="3.40.50.620">
    <property type="entry name" value="HUPs"/>
    <property type="match status" value="1"/>
</dbReference>
<dbReference type="Gene3D" id="3.30.1300.10">
    <property type="entry name" value="Pantoate-beta-alanine ligase, C-terminal domain"/>
    <property type="match status" value="1"/>
</dbReference>
<dbReference type="HAMAP" id="MF_00158">
    <property type="entry name" value="PanC"/>
    <property type="match status" value="1"/>
</dbReference>
<dbReference type="InterPro" id="IPR004821">
    <property type="entry name" value="Cyt_trans-like"/>
</dbReference>
<dbReference type="InterPro" id="IPR003721">
    <property type="entry name" value="Pantoate_ligase"/>
</dbReference>
<dbReference type="InterPro" id="IPR042176">
    <property type="entry name" value="Pantoate_ligase_C"/>
</dbReference>
<dbReference type="InterPro" id="IPR014729">
    <property type="entry name" value="Rossmann-like_a/b/a_fold"/>
</dbReference>
<dbReference type="NCBIfam" id="TIGR00125">
    <property type="entry name" value="cyt_tran_rel"/>
    <property type="match status" value="1"/>
</dbReference>
<dbReference type="NCBIfam" id="TIGR00018">
    <property type="entry name" value="panC"/>
    <property type="match status" value="1"/>
</dbReference>
<dbReference type="PANTHER" id="PTHR21299">
    <property type="entry name" value="CYTIDYLATE KINASE/PANTOATE-BETA-ALANINE LIGASE"/>
    <property type="match status" value="1"/>
</dbReference>
<dbReference type="PANTHER" id="PTHR21299:SF1">
    <property type="entry name" value="PANTOATE--BETA-ALANINE LIGASE"/>
    <property type="match status" value="1"/>
</dbReference>
<dbReference type="Pfam" id="PF02569">
    <property type="entry name" value="Pantoate_ligase"/>
    <property type="match status" value="1"/>
</dbReference>
<dbReference type="SUPFAM" id="SSF52374">
    <property type="entry name" value="Nucleotidylyl transferase"/>
    <property type="match status" value="1"/>
</dbReference>
<protein>
    <recommendedName>
        <fullName evidence="1">Pantothenate synthetase</fullName>
        <shortName evidence="1">PS</shortName>
        <ecNumber evidence="1">6.3.2.1</ecNumber>
    </recommendedName>
    <alternativeName>
        <fullName evidence="1">Pantoate--beta-alanine ligase</fullName>
    </alternativeName>
    <alternativeName>
        <fullName evidence="1">Pantoate-activating enzyme</fullName>
    </alternativeName>
</protein>
<proteinExistence type="inferred from homology"/>
<feature type="chain" id="PRO_1000097026" description="Pantothenate synthetase">
    <location>
        <begin position="1"/>
        <end position="281"/>
    </location>
</feature>
<feature type="active site" description="Proton donor" evidence="1">
    <location>
        <position position="37"/>
    </location>
</feature>
<feature type="binding site" evidence="1">
    <location>
        <begin position="30"/>
        <end position="37"/>
    </location>
    <ligand>
        <name>ATP</name>
        <dbReference type="ChEBI" id="CHEBI:30616"/>
    </ligand>
</feature>
<feature type="binding site" evidence="1">
    <location>
        <position position="64"/>
    </location>
    <ligand>
        <name>(R)-pantoate</name>
        <dbReference type="ChEBI" id="CHEBI:15980"/>
    </ligand>
</feature>
<feature type="binding site" evidence="1">
    <location>
        <position position="64"/>
    </location>
    <ligand>
        <name>beta-alanine</name>
        <dbReference type="ChEBI" id="CHEBI:57966"/>
    </ligand>
</feature>
<feature type="binding site" evidence="1">
    <location>
        <begin position="150"/>
        <end position="153"/>
    </location>
    <ligand>
        <name>ATP</name>
        <dbReference type="ChEBI" id="CHEBI:30616"/>
    </ligand>
</feature>
<feature type="binding site" evidence="1">
    <location>
        <position position="156"/>
    </location>
    <ligand>
        <name>(R)-pantoate</name>
        <dbReference type="ChEBI" id="CHEBI:15980"/>
    </ligand>
</feature>
<feature type="binding site" evidence="1">
    <location>
        <position position="179"/>
    </location>
    <ligand>
        <name>ATP</name>
        <dbReference type="ChEBI" id="CHEBI:30616"/>
    </ligand>
</feature>
<feature type="binding site" evidence="1">
    <location>
        <begin position="187"/>
        <end position="190"/>
    </location>
    <ligand>
        <name>ATP</name>
        <dbReference type="ChEBI" id="CHEBI:30616"/>
    </ligand>
</feature>
<name>PANC_AKKM8</name>
<reference key="1">
    <citation type="journal article" date="2011" name="PLoS ONE">
        <title>The genome of Akkermansia muciniphila, a dedicated intestinal mucin degrader, and its use in exploring intestinal metagenomes.</title>
        <authorList>
            <person name="van Passel M.W."/>
            <person name="Kant R."/>
            <person name="Zoetendal E.G."/>
            <person name="Plugge C.M."/>
            <person name="Derrien M."/>
            <person name="Malfatti S.A."/>
            <person name="Chain P.S."/>
            <person name="Woyke T."/>
            <person name="Palva A."/>
            <person name="de Vos W.M."/>
            <person name="Smidt H."/>
        </authorList>
    </citation>
    <scope>NUCLEOTIDE SEQUENCE [LARGE SCALE GENOMIC DNA]</scope>
    <source>
        <strain>ATCC BAA-835 / DSM 22959 / JCM 33894 / BCRC 81048 / CCUG 64013 / CIP 107961 / Muc</strain>
    </source>
</reference>
<evidence type="ECO:0000255" key="1">
    <source>
        <dbReference type="HAMAP-Rule" id="MF_00158"/>
    </source>
</evidence>